<comment type="function">
    <text evidence="1">Catalyzes the methyl esterification of L-isoaspartyl residues in peptides and proteins that result from spontaneous decomposition of normal L-aspartyl and L-asparaginyl residues. It plays a role in the repair and/or degradation of damaged proteins.</text>
</comment>
<comment type="catalytic activity">
    <reaction evidence="1">
        <text>[protein]-L-isoaspartate + S-adenosyl-L-methionine = [protein]-L-isoaspartate alpha-methyl ester + S-adenosyl-L-homocysteine</text>
        <dbReference type="Rhea" id="RHEA:12705"/>
        <dbReference type="Rhea" id="RHEA-COMP:12143"/>
        <dbReference type="Rhea" id="RHEA-COMP:12144"/>
        <dbReference type="ChEBI" id="CHEBI:57856"/>
        <dbReference type="ChEBI" id="CHEBI:59789"/>
        <dbReference type="ChEBI" id="CHEBI:90596"/>
        <dbReference type="ChEBI" id="CHEBI:90598"/>
        <dbReference type="EC" id="2.1.1.77"/>
    </reaction>
</comment>
<comment type="subcellular location">
    <subcellularLocation>
        <location evidence="1">Cytoplasm</location>
    </subcellularLocation>
</comment>
<comment type="similarity">
    <text evidence="1">Belongs to the methyltransferase superfamily. L-isoaspartyl/D-aspartyl protein methyltransferase family.</text>
</comment>
<gene>
    <name evidence="1" type="primary">pcm</name>
    <name type="ordered locus">SBO_2777</name>
</gene>
<keyword id="KW-0963">Cytoplasm</keyword>
<keyword id="KW-0489">Methyltransferase</keyword>
<keyword id="KW-0949">S-adenosyl-L-methionine</keyword>
<keyword id="KW-0808">Transferase</keyword>
<dbReference type="EC" id="2.1.1.77" evidence="1"/>
<dbReference type="EMBL" id="CP000036">
    <property type="protein sequence ID" value="ABB67303.1"/>
    <property type="molecule type" value="Genomic_DNA"/>
</dbReference>
<dbReference type="RefSeq" id="WP_000254708.1">
    <property type="nucleotide sequence ID" value="NC_007613.1"/>
</dbReference>
<dbReference type="SMR" id="Q31XA5"/>
<dbReference type="GeneID" id="93779263"/>
<dbReference type="KEGG" id="sbo:SBO_2777"/>
<dbReference type="HOGENOM" id="CLU_055432_2_0_6"/>
<dbReference type="Proteomes" id="UP000007067">
    <property type="component" value="Chromosome"/>
</dbReference>
<dbReference type="GO" id="GO:0005737">
    <property type="term" value="C:cytoplasm"/>
    <property type="evidence" value="ECO:0007669"/>
    <property type="project" value="UniProtKB-SubCell"/>
</dbReference>
<dbReference type="GO" id="GO:0004719">
    <property type="term" value="F:protein-L-isoaspartate (D-aspartate) O-methyltransferase activity"/>
    <property type="evidence" value="ECO:0007669"/>
    <property type="project" value="UniProtKB-UniRule"/>
</dbReference>
<dbReference type="GO" id="GO:0032259">
    <property type="term" value="P:methylation"/>
    <property type="evidence" value="ECO:0007669"/>
    <property type="project" value="UniProtKB-KW"/>
</dbReference>
<dbReference type="GO" id="GO:0036211">
    <property type="term" value="P:protein modification process"/>
    <property type="evidence" value="ECO:0007669"/>
    <property type="project" value="UniProtKB-UniRule"/>
</dbReference>
<dbReference type="GO" id="GO:0030091">
    <property type="term" value="P:protein repair"/>
    <property type="evidence" value="ECO:0007669"/>
    <property type="project" value="UniProtKB-UniRule"/>
</dbReference>
<dbReference type="CDD" id="cd02440">
    <property type="entry name" value="AdoMet_MTases"/>
    <property type="match status" value="1"/>
</dbReference>
<dbReference type="FunFam" id="3.40.50.150:FF:000010">
    <property type="entry name" value="Protein-L-isoaspartate O-methyltransferase"/>
    <property type="match status" value="1"/>
</dbReference>
<dbReference type="Gene3D" id="3.40.50.150">
    <property type="entry name" value="Vaccinia Virus protein VP39"/>
    <property type="match status" value="1"/>
</dbReference>
<dbReference type="HAMAP" id="MF_00090">
    <property type="entry name" value="PIMT"/>
    <property type="match status" value="1"/>
</dbReference>
<dbReference type="InterPro" id="IPR000682">
    <property type="entry name" value="PCMT"/>
</dbReference>
<dbReference type="InterPro" id="IPR029063">
    <property type="entry name" value="SAM-dependent_MTases_sf"/>
</dbReference>
<dbReference type="NCBIfam" id="TIGR00080">
    <property type="entry name" value="pimt"/>
    <property type="match status" value="1"/>
</dbReference>
<dbReference type="NCBIfam" id="NF001453">
    <property type="entry name" value="PRK00312.1"/>
    <property type="match status" value="1"/>
</dbReference>
<dbReference type="PANTHER" id="PTHR11579">
    <property type="entry name" value="PROTEIN-L-ISOASPARTATE O-METHYLTRANSFERASE"/>
    <property type="match status" value="1"/>
</dbReference>
<dbReference type="PANTHER" id="PTHR11579:SF0">
    <property type="entry name" value="PROTEIN-L-ISOASPARTATE(D-ASPARTATE) O-METHYLTRANSFERASE"/>
    <property type="match status" value="1"/>
</dbReference>
<dbReference type="Pfam" id="PF01135">
    <property type="entry name" value="PCMT"/>
    <property type="match status" value="1"/>
</dbReference>
<dbReference type="SUPFAM" id="SSF53335">
    <property type="entry name" value="S-adenosyl-L-methionine-dependent methyltransferases"/>
    <property type="match status" value="1"/>
</dbReference>
<dbReference type="PROSITE" id="PS01279">
    <property type="entry name" value="PCMT"/>
    <property type="match status" value="1"/>
</dbReference>
<feature type="chain" id="PRO_1000004825" description="Protein-L-isoaspartate O-methyltransferase">
    <location>
        <begin position="1"/>
        <end position="208"/>
    </location>
</feature>
<feature type="active site" evidence="1">
    <location>
        <position position="59"/>
    </location>
</feature>
<evidence type="ECO:0000255" key="1">
    <source>
        <dbReference type="HAMAP-Rule" id="MF_00090"/>
    </source>
</evidence>
<protein>
    <recommendedName>
        <fullName evidence="1">Protein-L-isoaspartate O-methyltransferase</fullName>
        <ecNumber evidence="1">2.1.1.77</ecNumber>
    </recommendedName>
    <alternativeName>
        <fullName evidence="1">L-isoaspartyl protein carboxyl methyltransferase</fullName>
    </alternativeName>
    <alternativeName>
        <fullName evidence="1">Protein L-isoaspartyl methyltransferase</fullName>
    </alternativeName>
    <alternativeName>
        <fullName evidence="1">Protein-beta-aspartate methyltransferase</fullName>
        <shortName evidence="1">PIMT</shortName>
    </alternativeName>
</protein>
<organism>
    <name type="scientific">Shigella boydii serotype 4 (strain Sb227)</name>
    <dbReference type="NCBI Taxonomy" id="300268"/>
    <lineage>
        <taxon>Bacteria</taxon>
        <taxon>Pseudomonadati</taxon>
        <taxon>Pseudomonadota</taxon>
        <taxon>Gammaproteobacteria</taxon>
        <taxon>Enterobacterales</taxon>
        <taxon>Enterobacteriaceae</taxon>
        <taxon>Shigella</taxon>
    </lineage>
</organism>
<reference key="1">
    <citation type="journal article" date="2005" name="Nucleic Acids Res.">
        <title>Genome dynamics and diversity of Shigella species, the etiologic agents of bacillary dysentery.</title>
        <authorList>
            <person name="Yang F."/>
            <person name="Yang J."/>
            <person name="Zhang X."/>
            <person name="Chen L."/>
            <person name="Jiang Y."/>
            <person name="Yan Y."/>
            <person name="Tang X."/>
            <person name="Wang J."/>
            <person name="Xiong Z."/>
            <person name="Dong J."/>
            <person name="Xue Y."/>
            <person name="Zhu Y."/>
            <person name="Xu X."/>
            <person name="Sun L."/>
            <person name="Chen S."/>
            <person name="Nie H."/>
            <person name="Peng J."/>
            <person name="Xu J."/>
            <person name="Wang Y."/>
            <person name="Yuan Z."/>
            <person name="Wen Y."/>
            <person name="Yao Z."/>
            <person name="Shen Y."/>
            <person name="Qiang B."/>
            <person name="Hou Y."/>
            <person name="Yu J."/>
            <person name="Jin Q."/>
        </authorList>
    </citation>
    <scope>NUCLEOTIDE SEQUENCE [LARGE SCALE GENOMIC DNA]</scope>
    <source>
        <strain>Sb227</strain>
    </source>
</reference>
<name>PIMT_SHIBS</name>
<sequence>MVSRRVQALLDQLRAQGIQDEQVLNALAAVPREKFVDEAFEQKAWDNIALPIGQGQTISQPYMVARMTELLELTPQSRVLEIGTGSGYQTAILAHLVQHVCSVERIKGLQWQARRRLKNLDLHNVSTRHGDGWQGWQARAPFDAIIVTAAPPEIPTALMTQLDEGGILVLPVGEEHQYLKRVRRRGGEFIIDTVEAVRFVPLVKGELA</sequence>
<accession>Q31XA5</accession>
<proteinExistence type="inferred from homology"/>